<feature type="chain" id="PRO_0000214357" description="UPF0301 protein XF_2228">
    <location>
        <begin position="1"/>
        <end position="188"/>
    </location>
</feature>
<comment type="similarity">
    <text evidence="1">Belongs to the UPF0301 (AlgH) family.</text>
</comment>
<sequence>MSMPTMTLVNQLLIALPSMPDPHFARGVALICQHDSNGSMGVVLNRPSEYTLGEVLFQMGIETASETLREQVVLAGGPVHPDRGFVIYDSEHVWGPSLLIGDGLYLTTSRDVLTAMAEGSGPSRALVALGCAGWAAGQLELELVENNWLMVPADASLLFDTALEQRWQRAAGRIGVDLFRLTDYTGHA</sequence>
<gene>
    <name type="ordered locus">XF_2228</name>
</gene>
<reference key="1">
    <citation type="journal article" date="2000" name="Nature">
        <title>The genome sequence of the plant pathogen Xylella fastidiosa.</title>
        <authorList>
            <person name="Simpson A.J.G."/>
            <person name="Reinach F.C."/>
            <person name="Arruda P."/>
            <person name="Abreu F.A."/>
            <person name="Acencio M."/>
            <person name="Alvarenga R."/>
            <person name="Alves L.M.C."/>
            <person name="Araya J.E."/>
            <person name="Baia G.S."/>
            <person name="Baptista C.S."/>
            <person name="Barros M.H."/>
            <person name="Bonaccorsi E.D."/>
            <person name="Bordin S."/>
            <person name="Bove J.M."/>
            <person name="Briones M.R.S."/>
            <person name="Bueno M.R.P."/>
            <person name="Camargo A.A."/>
            <person name="Camargo L.E.A."/>
            <person name="Carraro D.M."/>
            <person name="Carrer H."/>
            <person name="Colauto N.B."/>
            <person name="Colombo C."/>
            <person name="Costa F.F."/>
            <person name="Costa M.C.R."/>
            <person name="Costa-Neto C.M."/>
            <person name="Coutinho L.L."/>
            <person name="Cristofani M."/>
            <person name="Dias-Neto E."/>
            <person name="Docena C."/>
            <person name="El-Dorry H."/>
            <person name="Facincani A.P."/>
            <person name="Ferreira A.J.S."/>
            <person name="Ferreira V.C.A."/>
            <person name="Ferro J.A."/>
            <person name="Fraga J.S."/>
            <person name="Franca S.C."/>
            <person name="Franco M.C."/>
            <person name="Frohme M."/>
            <person name="Furlan L.R."/>
            <person name="Garnier M."/>
            <person name="Goldman G.H."/>
            <person name="Goldman M.H.S."/>
            <person name="Gomes S.L."/>
            <person name="Gruber A."/>
            <person name="Ho P.L."/>
            <person name="Hoheisel J.D."/>
            <person name="Junqueira M.L."/>
            <person name="Kemper E.L."/>
            <person name="Kitajima J.P."/>
            <person name="Krieger J.E."/>
            <person name="Kuramae E.E."/>
            <person name="Laigret F."/>
            <person name="Lambais M.R."/>
            <person name="Leite L.C.C."/>
            <person name="Lemos E.G.M."/>
            <person name="Lemos M.V.F."/>
            <person name="Lopes S.A."/>
            <person name="Lopes C.R."/>
            <person name="Machado J.A."/>
            <person name="Machado M.A."/>
            <person name="Madeira A.M.B.N."/>
            <person name="Madeira H.M.F."/>
            <person name="Marino C.L."/>
            <person name="Marques M.V."/>
            <person name="Martins E.A.L."/>
            <person name="Martins E.M.F."/>
            <person name="Matsukuma A.Y."/>
            <person name="Menck C.F.M."/>
            <person name="Miracca E.C."/>
            <person name="Miyaki C.Y."/>
            <person name="Monteiro-Vitorello C.B."/>
            <person name="Moon D.H."/>
            <person name="Nagai M.A."/>
            <person name="Nascimento A.L.T.O."/>
            <person name="Netto L.E.S."/>
            <person name="Nhani A. Jr."/>
            <person name="Nobrega F.G."/>
            <person name="Nunes L.R."/>
            <person name="Oliveira M.A."/>
            <person name="de Oliveira M.C."/>
            <person name="de Oliveira R.C."/>
            <person name="Palmieri D.A."/>
            <person name="Paris A."/>
            <person name="Peixoto B.R."/>
            <person name="Pereira G.A.G."/>
            <person name="Pereira H.A. Jr."/>
            <person name="Pesquero J.B."/>
            <person name="Quaggio R.B."/>
            <person name="Roberto P.G."/>
            <person name="Rodrigues V."/>
            <person name="de Rosa A.J.M."/>
            <person name="de Rosa V.E. Jr."/>
            <person name="de Sa R.G."/>
            <person name="Santelli R.V."/>
            <person name="Sawasaki H.E."/>
            <person name="da Silva A.C.R."/>
            <person name="da Silva A.M."/>
            <person name="da Silva F.R."/>
            <person name="Silva W.A. Jr."/>
            <person name="da Silveira J.F."/>
            <person name="Silvestri M.L.Z."/>
            <person name="Siqueira W.J."/>
            <person name="de Souza A.A."/>
            <person name="de Souza A.P."/>
            <person name="Terenzi M.F."/>
            <person name="Truffi D."/>
            <person name="Tsai S.M."/>
            <person name="Tsuhako M.H."/>
            <person name="Vallada H."/>
            <person name="Van Sluys M.A."/>
            <person name="Verjovski-Almeida S."/>
            <person name="Vettore A.L."/>
            <person name="Zago M.A."/>
            <person name="Zatz M."/>
            <person name="Meidanis J."/>
            <person name="Setubal J.C."/>
        </authorList>
    </citation>
    <scope>NUCLEOTIDE SEQUENCE [LARGE SCALE GENOMIC DNA]</scope>
    <source>
        <strain>9a5c</strain>
    </source>
</reference>
<dbReference type="EMBL" id="AE003849">
    <property type="protein sequence ID" value="AAF85027.1"/>
    <property type="molecule type" value="Genomic_DNA"/>
</dbReference>
<dbReference type="PIR" id="B82584">
    <property type="entry name" value="B82584"/>
</dbReference>
<dbReference type="RefSeq" id="WP_010894676.1">
    <property type="nucleotide sequence ID" value="NC_002488.3"/>
</dbReference>
<dbReference type="SMR" id="Q9PBB6"/>
<dbReference type="STRING" id="160492.XF_2228"/>
<dbReference type="KEGG" id="xfa:XF_2228"/>
<dbReference type="eggNOG" id="COG1678">
    <property type="taxonomic scope" value="Bacteria"/>
</dbReference>
<dbReference type="HOGENOM" id="CLU_057596_1_0_6"/>
<dbReference type="Proteomes" id="UP000000812">
    <property type="component" value="Chromosome"/>
</dbReference>
<dbReference type="GO" id="GO:0005829">
    <property type="term" value="C:cytosol"/>
    <property type="evidence" value="ECO:0007669"/>
    <property type="project" value="TreeGrafter"/>
</dbReference>
<dbReference type="Gene3D" id="3.40.1740.10">
    <property type="entry name" value="VC0467-like"/>
    <property type="match status" value="1"/>
</dbReference>
<dbReference type="HAMAP" id="MF_00758">
    <property type="entry name" value="UPF0301"/>
    <property type="match status" value="1"/>
</dbReference>
<dbReference type="InterPro" id="IPR003774">
    <property type="entry name" value="AlgH-like"/>
</dbReference>
<dbReference type="NCBIfam" id="NF001266">
    <property type="entry name" value="PRK00228.1-1"/>
    <property type="match status" value="1"/>
</dbReference>
<dbReference type="PANTHER" id="PTHR30327">
    <property type="entry name" value="UNCHARACTERIZED PROTEIN YQGE"/>
    <property type="match status" value="1"/>
</dbReference>
<dbReference type="PANTHER" id="PTHR30327:SF1">
    <property type="entry name" value="UPF0301 PROTEIN YQGE"/>
    <property type="match status" value="1"/>
</dbReference>
<dbReference type="Pfam" id="PF02622">
    <property type="entry name" value="DUF179"/>
    <property type="match status" value="1"/>
</dbReference>
<dbReference type="SUPFAM" id="SSF143456">
    <property type="entry name" value="VC0467-like"/>
    <property type="match status" value="1"/>
</dbReference>
<organism>
    <name type="scientific">Xylella fastidiosa (strain 9a5c)</name>
    <dbReference type="NCBI Taxonomy" id="160492"/>
    <lineage>
        <taxon>Bacteria</taxon>
        <taxon>Pseudomonadati</taxon>
        <taxon>Pseudomonadota</taxon>
        <taxon>Gammaproteobacteria</taxon>
        <taxon>Lysobacterales</taxon>
        <taxon>Lysobacteraceae</taxon>
        <taxon>Xylella</taxon>
    </lineage>
</organism>
<protein>
    <recommendedName>
        <fullName evidence="1">UPF0301 protein XF_2228</fullName>
    </recommendedName>
</protein>
<proteinExistence type="inferred from homology"/>
<accession>Q9PBB6</accession>
<name>Y2228_XYLFA</name>
<evidence type="ECO:0000255" key="1">
    <source>
        <dbReference type="HAMAP-Rule" id="MF_00758"/>
    </source>
</evidence>